<protein>
    <recommendedName>
        <fullName evidence="1">ATP-dependent protease ATPase subunit HslU</fullName>
    </recommendedName>
    <alternativeName>
        <fullName evidence="1">Unfoldase HslU</fullName>
    </alternativeName>
</protein>
<name>HSLU_HALH5</name>
<proteinExistence type="inferred from homology"/>
<sequence length="464" mass="52634">MKNVLTPRQIVERLDQYIVGQEGAKRSVAIALRNRYRRFQLEDKLRDEITPKNILMIGPTGVGKTEIARRLAKLVGAPFVKVEATKFTEVGYVGRDVESMIRDLVETSVRLVKEEKMKGVKKQAEEQANQRIVELLVPAKKKTQAYKNPLEMLFGQQQENTDHQETSAEQDTLTERRRRMSHQLALGELEDHYVTVEVEEQTPQFFDMLQGSGMEQMGMNMQEMLGNMMPKKRKKRKLTVREARRVLTEEEAQKLIDMDEVTQEAVSKAEQLGIVFIDEIDKIAGKGQQSADVSREGVQRDILPIVEGSTVVTKYGPVSTDHMLFIGAGAFHVAKPSDLIPELQGRFPIRVELSNLTVDDFVRILVEPDNALLKQYAALLETEGIKIVFTDEAVHKIATIATEVNQETENIGARRLHTLLERLLEDLSFEAPDVNLEEIVITPEYVTEKLAAIAKNRDLSQYIL</sequence>
<gene>
    <name evidence="1" type="primary">hslU</name>
    <name type="synonym">clpY</name>
    <name type="ordered locus">BH2463</name>
</gene>
<dbReference type="EMBL" id="BA000004">
    <property type="protein sequence ID" value="BAB06182.1"/>
    <property type="molecule type" value="Genomic_DNA"/>
</dbReference>
<dbReference type="PIR" id="G83957">
    <property type="entry name" value="G83957"/>
</dbReference>
<dbReference type="RefSeq" id="WP_010898616.1">
    <property type="nucleotide sequence ID" value="NC_002570.2"/>
</dbReference>
<dbReference type="SMR" id="Q9KA27"/>
<dbReference type="STRING" id="272558.gene:10728361"/>
<dbReference type="GeneID" id="87597984"/>
<dbReference type="KEGG" id="bha:BH2463"/>
<dbReference type="eggNOG" id="COG1220">
    <property type="taxonomic scope" value="Bacteria"/>
</dbReference>
<dbReference type="HOGENOM" id="CLU_033123_0_0_9"/>
<dbReference type="Proteomes" id="UP000001258">
    <property type="component" value="Chromosome"/>
</dbReference>
<dbReference type="GO" id="GO:0009376">
    <property type="term" value="C:HslUV protease complex"/>
    <property type="evidence" value="ECO:0007669"/>
    <property type="project" value="UniProtKB-UniRule"/>
</dbReference>
<dbReference type="GO" id="GO:0005524">
    <property type="term" value="F:ATP binding"/>
    <property type="evidence" value="ECO:0007669"/>
    <property type="project" value="UniProtKB-UniRule"/>
</dbReference>
<dbReference type="GO" id="GO:0016887">
    <property type="term" value="F:ATP hydrolysis activity"/>
    <property type="evidence" value="ECO:0007669"/>
    <property type="project" value="InterPro"/>
</dbReference>
<dbReference type="GO" id="GO:0008233">
    <property type="term" value="F:peptidase activity"/>
    <property type="evidence" value="ECO:0007669"/>
    <property type="project" value="InterPro"/>
</dbReference>
<dbReference type="GO" id="GO:0036402">
    <property type="term" value="F:proteasome-activating activity"/>
    <property type="evidence" value="ECO:0007669"/>
    <property type="project" value="UniProtKB-UniRule"/>
</dbReference>
<dbReference type="GO" id="GO:0043335">
    <property type="term" value="P:protein unfolding"/>
    <property type="evidence" value="ECO:0007669"/>
    <property type="project" value="UniProtKB-UniRule"/>
</dbReference>
<dbReference type="GO" id="GO:0051603">
    <property type="term" value="P:proteolysis involved in protein catabolic process"/>
    <property type="evidence" value="ECO:0007669"/>
    <property type="project" value="TreeGrafter"/>
</dbReference>
<dbReference type="CDD" id="cd19498">
    <property type="entry name" value="RecA-like_HslU"/>
    <property type="match status" value="1"/>
</dbReference>
<dbReference type="FunFam" id="3.40.50.300:FF:000220">
    <property type="entry name" value="ATP-dependent protease ATPase subunit HslU"/>
    <property type="match status" value="1"/>
</dbReference>
<dbReference type="Gene3D" id="1.10.8.60">
    <property type="match status" value="1"/>
</dbReference>
<dbReference type="Gene3D" id="3.40.50.300">
    <property type="entry name" value="P-loop containing nucleotide triphosphate hydrolases"/>
    <property type="match status" value="2"/>
</dbReference>
<dbReference type="HAMAP" id="MF_00249">
    <property type="entry name" value="HslU"/>
    <property type="match status" value="1"/>
</dbReference>
<dbReference type="InterPro" id="IPR003593">
    <property type="entry name" value="AAA+_ATPase"/>
</dbReference>
<dbReference type="InterPro" id="IPR050052">
    <property type="entry name" value="ATP-dep_Clp_protease_ClpX"/>
</dbReference>
<dbReference type="InterPro" id="IPR003959">
    <property type="entry name" value="ATPase_AAA_core"/>
</dbReference>
<dbReference type="InterPro" id="IPR019489">
    <property type="entry name" value="Clp_ATPase_C"/>
</dbReference>
<dbReference type="InterPro" id="IPR004491">
    <property type="entry name" value="HslU"/>
</dbReference>
<dbReference type="InterPro" id="IPR027417">
    <property type="entry name" value="P-loop_NTPase"/>
</dbReference>
<dbReference type="NCBIfam" id="TIGR00390">
    <property type="entry name" value="hslU"/>
    <property type="match status" value="1"/>
</dbReference>
<dbReference type="NCBIfam" id="NF003544">
    <property type="entry name" value="PRK05201.1"/>
    <property type="match status" value="1"/>
</dbReference>
<dbReference type="PANTHER" id="PTHR48102">
    <property type="entry name" value="ATP-DEPENDENT CLP PROTEASE ATP-BINDING SUBUNIT CLPX-LIKE, MITOCHONDRIAL-RELATED"/>
    <property type="match status" value="1"/>
</dbReference>
<dbReference type="PANTHER" id="PTHR48102:SF3">
    <property type="entry name" value="ATP-DEPENDENT PROTEASE ATPASE SUBUNIT HSLU"/>
    <property type="match status" value="1"/>
</dbReference>
<dbReference type="Pfam" id="PF00004">
    <property type="entry name" value="AAA"/>
    <property type="match status" value="1"/>
</dbReference>
<dbReference type="Pfam" id="PF07724">
    <property type="entry name" value="AAA_2"/>
    <property type="match status" value="1"/>
</dbReference>
<dbReference type="SMART" id="SM00382">
    <property type="entry name" value="AAA"/>
    <property type="match status" value="1"/>
</dbReference>
<dbReference type="SMART" id="SM01086">
    <property type="entry name" value="ClpB_D2-small"/>
    <property type="match status" value="1"/>
</dbReference>
<dbReference type="SUPFAM" id="SSF52540">
    <property type="entry name" value="P-loop containing nucleoside triphosphate hydrolases"/>
    <property type="match status" value="1"/>
</dbReference>
<reference key="1">
    <citation type="journal article" date="2000" name="Nucleic Acids Res.">
        <title>Complete genome sequence of the alkaliphilic bacterium Bacillus halodurans and genomic sequence comparison with Bacillus subtilis.</title>
        <authorList>
            <person name="Takami H."/>
            <person name="Nakasone K."/>
            <person name="Takaki Y."/>
            <person name="Maeno G."/>
            <person name="Sasaki R."/>
            <person name="Masui N."/>
            <person name="Fuji F."/>
            <person name="Hirama C."/>
            <person name="Nakamura Y."/>
            <person name="Ogasawara N."/>
            <person name="Kuhara S."/>
            <person name="Horikoshi K."/>
        </authorList>
    </citation>
    <scope>NUCLEOTIDE SEQUENCE [LARGE SCALE GENOMIC DNA]</scope>
    <source>
        <strain>ATCC BAA-125 / DSM 18197 / FERM 7344 / JCM 9153 / C-125</strain>
    </source>
</reference>
<comment type="function">
    <text evidence="1">ATPase subunit of a proteasome-like degradation complex; this subunit has chaperone activity. The binding of ATP and its subsequent hydrolysis by HslU are essential for unfolding of protein substrates subsequently hydrolyzed by HslV. HslU recognizes the N-terminal part of its protein substrates and unfolds these before they are guided to HslV for hydrolysis.</text>
</comment>
<comment type="subunit">
    <text evidence="1">A double ring-shaped homohexamer of HslV is capped on each side by a ring-shaped HslU homohexamer. The assembly of the HslU/HslV complex is dependent on binding of ATP.</text>
</comment>
<comment type="subcellular location">
    <subcellularLocation>
        <location evidence="1">Cytoplasm</location>
    </subcellularLocation>
</comment>
<comment type="similarity">
    <text evidence="1">Belongs to the ClpX chaperone family. HslU subfamily.</text>
</comment>
<accession>Q9KA27</accession>
<feature type="chain" id="PRO_0000160473" description="ATP-dependent protease ATPase subunit HslU">
    <location>
        <begin position="1"/>
        <end position="464"/>
    </location>
</feature>
<feature type="binding site" evidence="1">
    <location>
        <position position="19"/>
    </location>
    <ligand>
        <name>ATP</name>
        <dbReference type="ChEBI" id="CHEBI:30616"/>
    </ligand>
</feature>
<feature type="binding site" evidence="1">
    <location>
        <begin position="61"/>
        <end position="66"/>
    </location>
    <ligand>
        <name>ATP</name>
        <dbReference type="ChEBI" id="CHEBI:30616"/>
    </ligand>
</feature>
<feature type="binding site" evidence="1">
    <location>
        <position position="278"/>
    </location>
    <ligand>
        <name>ATP</name>
        <dbReference type="ChEBI" id="CHEBI:30616"/>
    </ligand>
</feature>
<feature type="binding site" evidence="1">
    <location>
        <position position="342"/>
    </location>
    <ligand>
        <name>ATP</name>
        <dbReference type="ChEBI" id="CHEBI:30616"/>
    </ligand>
</feature>
<feature type="binding site" evidence="1">
    <location>
        <position position="414"/>
    </location>
    <ligand>
        <name>ATP</name>
        <dbReference type="ChEBI" id="CHEBI:30616"/>
    </ligand>
</feature>
<organism>
    <name type="scientific">Halalkalibacterium halodurans (strain ATCC BAA-125 / DSM 18197 / FERM 7344 / JCM 9153 / C-125)</name>
    <name type="common">Bacillus halodurans</name>
    <dbReference type="NCBI Taxonomy" id="272558"/>
    <lineage>
        <taxon>Bacteria</taxon>
        <taxon>Bacillati</taxon>
        <taxon>Bacillota</taxon>
        <taxon>Bacilli</taxon>
        <taxon>Bacillales</taxon>
        <taxon>Bacillaceae</taxon>
        <taxon>Halalkalibacterium (ex Joshi et al. 2022)</taxon>
    </lineage>
</organism>
<evidence type="ECO:0000255" key="1">
    <source>
        <dbReference type="HAMAP-Rule" id="MF_00249"/>
    </source>
</evidence>
<keyword id="KW-0067">ATP-binding</keyword>
<keyword id="KW-0143">Chaperone</keyword>
<keyword id="KW-0963">Cytoplasm</keyword>
<keyword id="KW-0547">Nucleotide-binding</keyword>
<keyword id="KW-1185">Reference proteome</keyword>